<name>CCME_ACTPJ</name>
<sequence length="181" mass="19755">MNPRRKSRLKVVVSIIFGVAVAAGLTLYALSQNIDLFYTPSEIVNGKNDDPDQKPEVGQRIRVGGMVVEGSVKRDDKTLKVEFEANDIGPSITVEYEGILPDLFREGQGIVAQGVLIEPTRLKATEVLAKHDENYMPPELGDKLKEQHGAAGISEADLKGTSARDKAEIERTLKTLQGEAN</sequence>
<gene>
    <name evidence="1" type="primary">ccmE</name>
    <name evidence="1" type="synonym">cycJ</name>
    <name type="ordered locus">APJL_1386</name>
</gene>
<dbReference type="EMBL" id="CP000687">
    <property type="protein sequence ID" value="ABY69942.1"/>
    <property type="molecule type" value="Genomic_DNA"/>
</dbReference>
<dbReference type="RefSeq" id="WP_005601970.1">
    <property type="nucleotide sequence ID" value="NC_010278.1"/>
</dbReference>
<dbReference type="SMR" id="B0BQV7"/>
<dbReference type="GeneID" id="48599622"/>
<dbReference type="KEGG" id="apj:APJL_1386"/>
<dbReference type="HOGENOM" id="CLU_079503_1_0_6"/>
<dbReference type="Proteomes" id="UP000008547">
    <property type="component" value="Chromosome"/>
</dbReference>
<dbReference type="GO" id="GO:0005886">
    <property type="term" value="C:plasma membrane"/>
    <property type="evidence" value="ECO:0007669"/>
    <property type="project" value="UniProtKB-SubCell"/>
</dbReference>
<dbReference type="GO" id="GO:0020037">
    <property type="term" value="F:heme binding"/>
    <property type="evidence" value="ECO:0007669"/>
    <property type="project" value="InterPro"/>
</dbReference>
<dbReference type="GO" id="GO:0046872">
    <property type="term" value="F:metal ion binding"/>
    <property type="evidence" value="ECO:0007669"/>
    <property type="project" value="UniProtKB-KW"/>
</dbReference>
<dbReference type="GO" id="GO:0017004">
    <property type="term" value="P:cytochrome complex assembly"/>
    <property type="evidence" value="ECO:0007669"/>
    <property type="project" value="UniProtKB-KW"/>
</dbReference>
<dbReference type="FunFam" id="2.40.50.140:FF:000104">
    <property type="entry name" value="Cytochrome c-type biogenesis protein CcmE"/>
    <property type="match status" value="1"/>
</dbReference>
<dbReference type="Gene3D" id="2.40.50.140">
    <property type="entry name" value="Nucleic acid-binding proteins"/>
    <property type="match status" value="1"/>
</dbReference>
<dbReference type="HAMAP" id="MF_01959">
    <property type="entry name" value="CcmE"/>
    <property type="match status" value="1"/>
</dbReference>
<dbReference type="InterPro" id="IPR004329">
    <property type="entry name" value="CcmE"/>
</dbReference>
<dbReference type="InterPro" id="IPR036127">
    <property type="entry name" value="CcmE-like_sf"/>
</dbReference>
<dbReference type="InterPro" id="IPR012340">
    <property type="entry name" value="NA-bd_OB-fold"/>
</dbReference>
<dbReference type="NCBIfam" id="NF009638">
    <property type="entry name" value="PRK13165.1"/>
    <property type="match status" value="1"/>
</dbReference>
<dbReference type="NCBIfam" id="NF009727">
    <property type="entry name" value="PRK13254.1-1"/>
    <property type="match status" value="1"/>
</dbReference>
<dbReference type="NCBIfam" id="NF009729">
    <property type="entry name" value="PRK13254.1-3"/>
    <property type="match status" value="1"/>
</dbReference>
<dbReference type="PANTHER" id="PTHR34128">
    <property type="entry name" value="CYTOCHROME C-TYPE BIOGENESIS PROTEIN CCME HOMOLOG, MITOCHONDRIAL"/>
    <property type="match status" value="1"/>
</dbReference>
<dbReference type="PANTHER" id="PTHR34128:SF2">
    <property type="entry name" value="CYTOCHROME C-TYPE BIOGENESIS PROTEIN CCME HOMOLOG, MITOCHONDRIAL"/>
    <property type="match status" value="1"/>
</dbReference>
<dbReference type="Pfam" id="PF03100">
    <property type="entry name" value="CcmE"/>
    <property type="match status" value="1"/>
</dbReference>
<dbReference type="SUPFAM" id="SSF82093">
    <property type="entry name" value="Heme chaperone CcmE"/>
    <property type="match status" value="1"/>
</dbReference>
<organism>
    <name type="scientific">Actinobacillus pleuropneumoniae serotype 3 (strain JL03)</name>
    <dbReference type="NCBI Taxonomy" id="434271"/>
    <lineage>
        <taxon>Bacteria</taxon>
        <taxon>Pseudomonadati</taxon>
        <taxon>Pseudomonadota</taxon>
        <taxon>Gammaproteobacteria</taxon>
        <taxon>Pasteurellales</taxon>
        <taxon>Pasteurellaceae</taxon>
        <taxon>Actinobacillus</taxon>
    </lineage>
</organism>
<evidence type="ECO:0000255" key="1">
    <source>
        <dbReference type="HAMAP-Rule" id="MF_01959"/>
    </source>
</evidence>
<evidence type="ECO:0000256" key="2">
    <source>
        <dbReference type="SAM" id="MobiDB-lite"/>
    </source>
</evidence>
<protein>
    <recommendedName>
        <fullName evidence="1">Cytochrome c-type biogenesis protein CcmE</fullName>
    </recommendedName>
    <alternativeName>
        <fullName evidence="1">Cytochrome c maturation protein E</fullName>
    </alternativeName>
    <alternativeName>
        <fullName evidence="1">Heme chaperone CcmE</fullName>
    </alternativeName>
</protein>
<accession>B0BQV7</accession>
<reference key="1">
    <citation type="journal article" date="2008" name="PLoS ONE">
        <title>Genome biology of Actinobacillus pleuropneumoniae JL03, an isolate of serotype 3 prevalent in China.</title>
        <authorList>
            <person name="Xu Z."/>
            <person name="Zhou Y."/>
            <person name="Li L."/>
            <person name="Zhou R."/>
            <person name="Xiao S."/>
            <person name="Wan Y."/>
            <person name="Zhang S."/>
            <person name="Wang K."/>
            <person name="Li W."/>
            <person name="Li L."/>
            <person name="Jin H."/>
            <person name="Kang M."/>
            <person name="Dalai B."/>
            <person name="Li T."/>
            <person name="Liu L."/>
            <person name="Cheng Y."/>
            <person name="Zhang L."/>
            <person name="Xu T."/>
            <person name="Zheng H."/>
            <person name="Pu S."/>
            <person name="Wang B."/>
            <person name="Gu W."/>
            <person name="Zhang X.L."/>
            <person name="Zhu G.-F."/>
            <person name="Wang S."/>
            <person name="Zhao G.-P."/>
            <person name="Chen H."/>
        </authorList>
    </citation>
    <scope>NUCLEOTIDE SEQUENCE [LARGE SCALE GENOMIC DNA]</scope>
    <source>
        <strain>JL03</strain>
    </source>
</reference>
<keyword id="KW-0997">Cell inner membrane</keyword>
<keyword id="KW-1003">Cell membrane</keyword>
<keyword id="KW-0201">Cytochrome c-type biogenesis</keyword>
<keyword id="KW-0349">Heme</keyword>
<keyword id="KW-0408">Iron</keyword>
<keyword id="KW-0472">Membrane</keyword>
<keyword id="KW-0479">Metal-binding</keyword>
<keyword id="KW-0735">Signal-anchor</keyword>
<keyword id="KW-0812">Transmembrane</keyword>
<keyword id="KW-1133">Transmembrane helix</keyword>
<feature type="chain" id="PRO_1000188998" description="Cytochrome c-type biogenesis protein CcmE">
    <location>
        <begin position="1"/>
        <end position="181"/>
    </location>
</feature>
<feature type="topological domain" description="Cytoplasmic" evidence="1">
    <location>
        <begin position="1"/>
        <end position="8"/>
    </location>
</feature>
<feature type="transmembrane region" description="Helical; Signal-anchor for type II membrane protein" evidence="1">
    <location>
        <begin position="9"/>
        <end position="29"/>
    </location>
</feature>
<feature type="topological domain" description="Periplasmic" evidence="1">
    <location>
        <begin position="30"/>
        <end position="181"/>
    </location>
</feature>
<feature type="region of interest" description="Disordered" evidence="2">
    <location>
        <begin position="135"/>
        <end position="166"/>
    </location>
</feature>
<feature type="compositionally biased region" description="Basic and acidic residues" evidence="2">
    <location>
        <begin position="135"/>
        <end position="148"/>
    </location>
</feature>
<feature type="compositionally biased region" description="Basic and acidic residues" evidence="2">
    <location>
        <begin position="156"/>
        <end position="166"/>
    </location>
</feature>
<feature type="binding site" description="covalent" evidence="1">
    <location>
        <position position="131"/>
    </location>
    <ligand>
        <name>heme</name>
        <dbReference type="ChEBI" id="CHEBI:30413"/>
    </ligand>
</feature>
<feature type="binding site" description="axial binding residue" evidence="1">
    <location>
        <position position="135"/>
    </location>
    <ligand>
        <name>heme</name>
        <dbReference type="ChEBI" id="CHEBI:30413"/>
    </ligand>
    <ligandPart>
        <name>Fe</name>
        <dbReference type="ChEBI" id="CHEBI:18248"/>
    </ligandPart>
</feature>
<comment type="function">
    <text evidence="1">Heme chaperone required for the biogenesis of c-type cytochromes. Transiently binds heme delivered by CcmC and transfers the heme to apo-cytochromes in a process facilitated by CcmF and CcmH.</text>
</comment>
<comment type="subcellular location">
    <subcellularLocation>
        <location evidence="1">Cell inner membrane</location>
        <topology evidence="1">Single-pass type II membrane protein</topology>
        <orientation evidence="1">Periplasmic side</orientation>
    </subcellularLocation>
</comment>
<comment type="similarity">
    <text evidence="1">Belongs to the CcmE/CycJ family.</text>
</comment>
<proteinExistence type="inferred from homology"/>